<comment type="function">
    <text evidence="1">Specifically methylates guanosine-37 in various tRNAs.</text>
</comment>
<comment type="catalytic activity">
    <reaction evidence="1">
        <text>guanosine(37) in tRNA + S-adenosyl-L-methionine = N(1)-methylguanosine(37) in tRNA + S-adenosyl-L-homocysteine + H(+)</text>
        <dbReference type="Rhea" id="RHEA:36899"/>
        <dbReference type="Rhea" id="RHEA-COMP:10145"/>
        <dbReference type="Rhea" id="RHEA-COMP:10147"/>
        <dbReference type="ChEBI" id="CHEBI:15378"/>
        <dbReference type="ChEBI" id="CHEBI:57856"/>
        <dbReference type="ChEBI" id="CHEBI:59789"/>
        <dbReference type="ChEBI" id="CHEBI:73542"/>
        <dbReference type="ChEBI" id="CHEBI:74269"/>
        <dbReference type="EC" id="2.1.1.228"/>
    </reaction>
</comment>
<comment type="subunit">
    <text evidence="1">Homodimer.</text>
</comment>
<comment type="subcellular location">
    <subcellularLocation>
        <location evidence="1">Cytoplasm</location>
    </subcellularLocation>
</comment>
<comment type="similarity">
    <text evidence="1">Belongs to the RNA methyltransferase TrmD family.</text>
</comment>
<comment type="sequence caution" evidence="2">
    <conflict type="erroneous initiation">
        <sequence resource="EMBL-CDS" id="AAN24167"/>
    </conflict>
</comment>
<proteinExistence type="inferred from homology"/>
<name>TRMD_BIFLO</name>
<accession>Q8CY56</accession>
<gene>
    <name evidence="1" type="primary">trmD</name>
    <name type="ordered locus">BL0327</name>
</gene>
<organism>
    <name type="scientific">Bifidobacterium longum (strain NCC 2705)</name>
    <dbReference type="NCBI Taxonomy" id="206672"/>
    <lineage>
        <taxon>Bacteria</taxon>
        <taxon>Bacillati</taxon>
        <taxon>Actinomycetota</taxon>
        <taxon>Actinomycetes</taxon>
        <taxon>Bifidobacteriales</taxon>
        <taxon>Bifidobacteriaceae</taxon>
        <taxon>Bifidobacterium</taxon>
    </lineage>
</organism>
<dbReference type="EC" id="2.1.1.228" evidence="1"/>
<dbReference type="EMBL" id="AE014295">
    <property type="protein sequence ID" value="AAN24167.1"/>
    <property type="status" value="ALT_INIT"/>
    <property type="molecule type" value="Genomic_DNA"/>
</dbReference>
<dbReference type="RefSeq" id="NP_695531.1">
    <property type="nucleotide sequence ID" value="NC_004307.2"/>
</dbReference>
<dbReference type="RefSeq" id="WP_007054789.1">
    <property type="nucleotide sequence ID" value="NC_004307.2"/>
</dbReference>
<dbReference type="SMR" id="Q8CY56"/>
<dbReference type="STRING" id="206672.BL0327"/>
<dbReference type="EnsemblBacteria" id="AAN24167">
    <property type="protein sequence ID" value="AAN24167"/>
    <property type="gene ID" value="BL0327"/>
</dbReference>
<dbReference type="GeneID" id="69577529"/>
<dbReference type="KEGG" id="blo:BL0327"/>
<dbReference type="PATRIC" id="fig|206672.9.peg.1066"/>
<dbReference type="HOGENOM" id="CLU_047363_0_0_11"/>
<dbReference type="OrthoDB" id="9807416at2"/>
<dbReference type="Proteomes" id="UP000000439">
    <property type="component" value="Chromosome"/>
</dbReference>
<dbReference type="GO" id="GO:0005829">
    <property type="term" value="C:cytosol"/>
    <property type="evidence" value="ECO:0007669"/>
    <property type="project" value="TreeGrafter"/>
</dbReference>
<dbReference type="GO" id="GO:0052906">
    <property type="term" value="F:tRNA (guanine(37)-N1)-methyltransferase activity"/>
    <property type="evidence" value="ECO:0007669"/>
    <property type="project" value="UniProtKB-UniRule"/>
</dbReference>
<dbReference type="GO" id="GO:0002939">
    <property type="term" value="P:tRNA N1-guanine methylation"/>
    <property type="evidence" value="ECO:0007669"/>
    <property type="project" value="TreeGrafter"/>
</dbReference>
<dbReference type="CDD" id="cd18080">
    <property type="entry name" value="TrmD-like"/>
    <property type="match status" value="1"/>
</dbReference>
<dbReference type="FunFam" id="1.10.1270.20:FF:000002">
    <property type="entry name" value="tRNA (guanine-N(1)-)-methyltransferase"/>
    <property type="match status" value="1"/>
</dbReference>
<dbReference type="Gene3D" id="3.40.1280.10">
    <property type="match status" value="1"/>
</dbReference>
<dbReference type="Gene3D" id="1.10.1270.20">
    <property type="entry name" value="tRNA(m1g37)methyltransferase, domain 2"/>
    <property type="match status" value="1"/>
</dbReference>
<dbReference type="HAMAP" id="MF_00605">
    <property type="entry name" value="TrmD"/>
    <property type="match status" value="1"/>
</dbReference>
<dbReference type="InterPro" id="IPR029028">
    <property type="entry name" value="Alpha/beta_knot_MTases"/>
</dbReference>
<dbReference type="InterPro" id="IPR023148">
    <property type="entry name" value="tRNA_m1G_MeTrfase_C_sf"/>
</dbReference>
<dbReference type="InterPro" id="IPR002649">
    <property type="entry name" value="tRNA_m1G_MeTrfase_TrmD"/>
</dbReference>
<dbReference type="InterPro" id="IPR029026">
    <property type="entry name" value="tRNA_m1G_MTases_N"/>
</dbReference>
<dbReference type="InterPro" id="IPR016009">
    <property type="entry name" value="tRNA_MeTrfase_TRMD/TRM10"/>
</dbReference>
<dbReference type="NCBIfam" id="NF000648">
    <property type="entry name" value="PRK00026.1"/>
    <property type="match status" value="1"/>
</dbReference>
<dbReference type="NCBIfam" id="TIGR00088">
    <property type="entry name" value="trmD"/>
    <property type="match status" value="1"/>
</dbReference>
<dbReference type="PANTHER" id="PTHR46417">
    <property type="entry name" value="TRNA (GUANINE-N(1)-)-METHYLTRANSFERASE"/>
    <property type="match status" value="1"/>
</dbReference>
<dbReference type="PANTHER" id="PTHR46417:SF1">
    <property type="entry name" value="TRNA (GUANINE-N(1)-)-METHYLTRANSFERASE"/>
    <property type="match status" value="1"/>
</dbReference>
<dbReference type="Pfam" id="PF01746">
    <property type="entry name" value="tRNA_m1G_MT"/>
    <property type="match status" value="1"/>
</dbReference>
<dbReference type="PIRSF" id="PIRSF000386">
    <property type="entry name" value="tRNA_mtase"/>
    <property type="match status" value="1"/>
</dbReference>
<dbReference type="SUPFAM" id="SSF75217">
    <property type="entry name" value="alpha/beta knot"/>
    <property type="match status" value="1"/>
</dbReference>
<protein>
    <recommendedName>
        <fullName evidence="1">tRNA (guanine-N(1)-)-methyltransferase</fullName>
        <ecNumber evidence="1">2.1.1.228</ecNumber>
    </recommendedName>
    <alternativeName>
        <fullName evidence="1">M1G-methyltransferase</fullName>
    </alternativeName>
    <alternativeName>
        <fullName evidence="1">tRNA [GM37] methyltransferase</fullName>
    </alternativeName>
</protein>
<keyword id="KW-0963">Cytoplasm</keyword>
<keyword id="KW-0489">Methyltransferase</keyword>
<keyword id="KW-1185">Reference proteome</keyword>
<keyword id="KW-0949">S-adenosyl-L-methionine</keyword>
<keyword id="KW-0808">Transferase</keyword>
<keyword id="KW-0819">tRNA processing</keyword>
<feature type="chain" id="PRO_0000060334" description="tRNA (guanine-N(1)-)-methyltransferase">
    <location>
        <begin position="1"/>
        <end position="271"/>
    </location>
</feature>
<feature type="binding site" evidence="1">
    <location>
        <position position="120"/>
    </location>
    <ligand>
        <name>S-adenosyl-L-methionine</name>
        <dbReference type="ChEBI" id="CHEBI:59789"/>
    </ligand>
</feature>
<feature type="binding site" evidence="1">
    <location>
        <begin position="145"/>
        <end position="150"/>
    </location>
    <ligand>
        <name>S-adenosyl-L-methionine</name>
        <dbReference type="ChEBI" id="CHEBI:59789"/>
    </ligand>
</feature>
<reference key="1">
    <citation type="journal article" date="2002" name="Proc. Natl. Acad. Sci. U.S.A.">
        <title>The genome sequence of Bifidobacterium longum reflects its adaptation to the human gastrointestinal tract.</title>
        <authorList>
            <person name="Schell M.A."/>
            <person name="Karmirantzou M."/>
            <person name="Snel B."/>
            <person name="Vilanova D."/>
            <person name="Berger B."/>
            <person name="Pessi G."/>
            <person name="Zwahlen M.-C."/>
            <person name="Desiere F."/>
            <person name="Bork P."/>
            <person name="Delley M."/>
            <person name="Pridmore R.D."/>
            <person name="Arigoni F."/>
        </authorList>
    </citation>
    <scope>NUCLEOTIDE SEQUENCE [LARGE SCALE GENOMIC DNA]</scope>
    <source>
        <strain>NCC 2705</strain>
    </source>
</reference>
<sequence length="271" mass="29762">MKIDIVSVFPEYFEVMNLSLMGKAQAKGLLEIKAHNLRDWTHDVHHSVDDTPVGGGAGMVMKPEVWSECLDELLGFSQPSGSPAPSGAPVLIFPNPSAPLFTQRDATELSHADHLLFGCGRYEGYDARIPDYYRAQGVDVREYSIGDYVLNGGEVAVSVMLEAITRLMPGFMGNPDSIVEESYTGEGALLEHRQYTKPAVWRGIAVPDVLLSGDHGKVDRFRRDEALARTAEIRPDLIAALDCKALDKADRKTLMALGWEVSAAHPRRLAD</sequence>
<evidence type="ECO:0000255" key="1">
    <source>
        <dbReference type="HAMAP-Rule" id="MF_00605"/>
    </source>
</evidence>
<evidence type="ECO:0000305" key="2"/>